<feature type="chain" id="PRO_0000146655" description="Small ribosomal subunit protein uS10">
    <location>
        <begin position="1"/>
        <end position="102"/>
    </location>
</feature>
<feature type="region of interest" description="Disordered" evidence="2">
    <location>
        <begin position="33"/>
        <end position="59"/>
    </location>
</feature>
<sequence length="102" mass="11749">MQKARIKIASTNVRSLDEVANQIKQIAERTGVRMSGPIPLPTKRIRITTRKSPDGEGSATFDRWELRVHKRLIDIEADERAMRQIMRIRVPEDVTIEIELIS</sequence>
<comment type="function">
    <text evidence="1">Involved in the binding of tRNA to the ribosomes.</text>
</comment>
<comment type="subunit">
    <text evidence="1 3">Part of the 30S ribosomal subunit.</text>
</comment>
<comment type="similarity">
    <text evidence="1">Belongs to the universal ribosomal protein uS10 family.</text>
</comment>
<organism>
    <name type="scientific">Pyrococcus furiosus (strain ATCC 43587 / DSM 3638 / JCM 8422 / Vc1)</name>
    <dbReference type="NCBI Taxonomy" id="186497"/>
    <lineage>
        <taxon>Archaea</taxon>
        <taxon>Methanobacteriati</taxon>
        <taxon>Methanobacteriota</taxon>
        <taxon>Thermococci</taxon>
        <taxon>Thermococcales</taxon>
        <taxon>Thermococcaceae</taxon>
        <taxon>Pyrococcus</taxon>
    </lineage>
</organism>
<keyword id="KW-0002">3D-structure</keyword>
<keyword id="KW-1185">Reference proteome</keyword>
<keyword id="KW-0687">Ribonucleoprotein</keyword>
<keyword id="KW-0689">Ribosomal protein</keyword>
<dbReference type="EMBL" id="AE009950">
    <property type="protein sequence ID" value="AAL81500.1"/>
    <property type="molecule type" value="Genomic_DNA"/>
</dbReference>
<dbReference type="PDB" id="4V4N">
    <property type="method" value="EM"/>
    <property type="resolution" value="9.00 A"/>
    <property type="chains" value="L=1-102"/>
</dbReference>
<dbReference type="PDB" id="4V6U">
    <property type="method" value="EM"/>
    <property type="resolution" value="6.60 A"/>
    <property type="chains" value="AL=1-102"/>
</dbReference>
<dbReference type="PDB" id="5JB3">
    <property type="method" value="EM"/>
    <property type="resolution" value="5.34 A"/>
    <property type="chains" value="L=1-102"/>
</dbReference>
<dbReference type="PDB" id="5JBH">
    <property type="method" value="EM"/>
    <property type="resolution" value="5.34 A"/>
    <property type="chains" value="L=1-102"/>
</dbReference>
<dbReference type="PDBsum" id="4V4N"/>
<dbReference type="PDBsum" id="4V6U"/>
<dbReference type="PDBsum" id="5JB3"/>
<dbReference type="PDBsum" id="5JBH"/>
<dbReference type="EMDB" id="EMD-50611"/>
<dbReference type="EMDB" id="EMD-50612"/>
<dbReference type="EMDB" id="EMD-50613"/>
<dbReference type="EMDB" id="EMD-8149"/>
<dbReference type="SMR" id="P61885"/>
<dbReference type="STRING" id="186497.PF1376"/>
<dbReference type="PaxDb" id="186497-PF1376"/>
<dbReference type="KEGG" id="pfu:PF1376"/>
<dbReference type="PATRIC" id="fig|186497.12.peg.1439"/>
<dbReference type="eggNOG" id="arCOG01758">
    <property type="taxonomic scope" value="Archaea"/>
</dbReference>
<dbReference type="HOGENOM" id="CLU_122625_0_1_2"/>
<dbReference type="OrthoDB" id="371736at2157"/>
<dbReference type="PhylomeDB" id="P61885"/>
<dbReference type="Proteomes" id="UP000001013">
    <property type="component" value="Chromosome"/>
</dbReference>
<dbReference type="GO" id="GO:0015935">
    <property type="term" value="C:small ribosomal subunit"/>
    <property type="evidence" value="ECO:0007669"/>
    <property type="project" value="InterPro"/>
</dbReference>
<dbReference type="GO" id="GO:0003735">
    <property type="term" value="F:structural constituent of ribosome"/>
    <property type="evidence" value="ECO:0007669"/>
    <property type="project" value="InterPro"/>
</dbReference>
<dbReference type="GO" id="GO:0000049">
    <property type="term" value="F:tRNA binding"/>
    <property type="evidence" value="ECO:0007669"/>
    <property type="project" value="UniProtKB-UniRule"/>
</dbReference>
<dbReference type="GO" id="GO:0006412">
    <property type="term" value="P:translation"/>
    <property type="evidence" value="ECO:0007669"/>
    <property type="project" value="UniProtKB-UniRule"/>
</dbReference>
<dbReference type="FunFam" id="3.30.70.600:FF:000004">
    <property type="entry name" value="30S ribosomal protein S10"/>
    <property type="match status" value="1"/>
</dbReference>
<dbReference type="Gene3D" id="3.30.70.600">
    <property type="entry name" value="Ribosomal protein S10 domain"/>
    <property type="match status" value="1"/>
</dbReference>
<dbReference type="HAMAP" id="MF_00508">
    <property type="entry name" value="Ribosomal_uS10"/>
    <property type="match status" value="1"/>
</dbReference>
<dbReference type="InterPro" id="IPR001848">
    <property type="entry name" value="Ribosomal_uS10"/>
</dbReference>
<dbReference type="InterPro" id="IPR018268">
    <property type="entry name" value="Ribosomal_uS10_CS"/>
</dbReference>
<dbReference type="InterPro" id="IPR027486">
    <property type="entry name" value="Ribosomal_uS10_dom"/>
</dbReference>
<dbReference type="InterPro" id="IPR036838">
    <property type="entry name" value="Ribosomal_uS10_dom_sf"/>
</dbReference>
<dbReference type="InterPro" id="IPR005729">
    <property type="entry name" value="Ribosomal_uS10_euk/arc"/>
</dbReference>
<dbReference type="NCBIfam" id="TIGR01046">
    <property type="entry name" value="uS10_euk_arch"/>
    <property type="match status" value="1"/>
</dbReference>
<dbReference type="PANTHER" id="PTHR11700">
    <property type="entry name" value="30S RIBOSOMAL PROTEIN S10 FAMILY MEMBER"/>
    <property type="match status" value="1"/>
</dbReference>
<dbReference type="Pfam" id="PF00338">
    <property type="entry name" value="Ribosomal_S10"/>
    <property type="match status" value="1"/>
</dbReference>
<dbReference type="PRINTS" id="PR00971">
    <property type="entry name" value="RIBOSOMALS10"/>
</dbReference>
<dbReference type="SMART" id="SM01403">
    <property type="entry name" value="Ribosomal_S10"/>
    <property type="match status" value="1"/>
</dbReference>
<dbReference type="SUPFAM" id="SSF54999">
    <property type="entry name" value="Ribosomal protein S10"/>
    <property type="match status" value="1"/>
</dbReference>
<dbReference type="PROSITE" id="PS00361">
    <property type="entry name" value="RIBOSOMAL_S10"/>
    <property type="match status" value="1"/>
</dbReference>
<accession>P61885</accession>
<accession>P26753</accession>
<name>RS10_PYRFU</name>
<proteinExistence type="evidence at protein level"/>
<gene>
    <name evidence="1" type="primary">rps10</name>
    <name type="ordered locus">PF1376</name>
</gene>
<evidence type="ECO:0000255" key="1">
    <source>
        <dbReference type="HAMAP-Rule" id="MF_00508"/>
    </source>
</evidence>
<evidence type="ECO:0000256" key="2">
    <source>
        <dbReference type="SAM" id="MobiDB-lite"/>
    </source>
</evidence>
<evidence type="ECO:0000269" key="3">
    <source>
    </source>
</evidence>
<evidence type="ECO:0000305" key="4"/>
<evidence type="ECO:0007744" key="5">
    <source>
        <dbReference type="PDB" id="4V6U"/>
    </source>
</evidence>
<reference key="1">
    <citation type="journal article" date="1999" name="Genetics">
        <title>Divergence of the hyperthermophilic archaea Pyrococcus furiosus and P. horikoshii inferred from complete genomic sequences.</title>
        <authorList>
            <person name="Maeder D.L."/>
            <person name="Weiss R.B."/>
            <person name="Dunn D.M."/>
            <person name="Cherry J.L."/>
            <person name="Gonzalez J.M."/>
            <person name="DiRuggiero J."/>
            <person name="Robb F.T."/>
        </authorList>
    </citation>
    <scope>NUCLEOTIDE SEQUENCE [LARGE SCALE GENOMIC DNA]</scope>
    <source>
        <strain>ATCC 43587 / DSM 3638 / JCM 8422 / Vc1</strain>
    </source>
</reference>
<reference evidence="5" key="2">
    <citation type="journal article" date="2013" name="Nucleic Acids Res.">
        <title>Promiscuous behaviour of archaeal ribosomal proteins: implications for eukaryotic ribosome evolution.</title>
        <authorList>
            <person name="Armache J.P."/>
            <person name="Anger A.M."/>
            <person name="Marquez V."/>
            <person name="Franckenberg S."/>
            <person name="Frohlich T."/>
            <person name="Villa E."/>
            <person name="Berninghausen O."/>
            <person name="Thomm M."/>
            <person name="Arnold G.J."/>
            <person name="Beckmann R."/>
            <person name="Wilson D.N."/>
        </authorList>
    </citation>
    <scope>STRUCTURE BY ELECTRON MICROSCOPY (6.60 ANGSTROMS) IN THE 70S RIBOSOME</scope>
    <scope>SUBUNIT</scope>
</reference>
<protein>
    <recommendedName>
        <fullName evidence="1">Small ribosomal subunit protein uS10</fullName>
    </recommendedName>
    <alternativeName>
        <fullName evidence="4">30S ribosomal protein S10</fullName>
    </alternativeName>
</protein>